<protein>
    <recommendedName>
        <fullName>Uncharacterized 12.3 kDa protein in fus 3'region</fullName>
    </recommendedName>
</protein>
<name>YFUS_PYRWO</name>
<accession>P29085</accession>
<feature type="chain" id="PRO_0000066219" description="Uncharacterized 12.3 kDa protein in fus 3'region">
    <location>
        <begin position="1"/>
        <end position="106"/>
    </location>
</feature>
<dbReference type="EMBL" id="X67205">
    <property type="protein sequence ID" value="CAA47642.1"/>
    <property type="molecule type" value="Genomic_DNA"/>
</dbReference>
<dbReference type="PIR" id="S54742">
    <property type="entry name" value="S23865"/>
</dbReference>
<dbReference type="InterPro" id="IPR002749">
    <property type="entry name" value="DUF63"/>
</dbReference>
<dbReference type="PANTHER" id="PTHR40700:SF1">
    <property type="entry name" value="DUF63 DOMAIN-CONTAINING PROTEIN"/>
    <property type="match status" value="1"/>
</dbReference>
<dbReference type="PANTHER" id="PTHR40700">
    <property type="entry name" value="HYPOTHETICAL MEMBRANE PROTEIN, CONSERVED, DUF63 FAMILY"/>
    <property type="match status" value="1"/>
</dbReference>
<dbReference type="Pfam" id="PF01889">
    <property type="entry name" value="DUF63"/>
    <property type="match status" value="1"/>
</dbReference>
<organism>
    <name type="scientific">Pyrococcus woesei</name>
    <dbReference type="NCBI Taxonomy" id="2262"/>
    <lineage>
        <taxon>Archaea</taxon>
        <taxon>Methanobacteriati</taxon>
        <taxon>Methanobacteriota</taxon>
        <taxon>Thermococci</taxon>
        <taxon>Thermococcales</taxon>
        <taxon>Thermococcaceae</taxon>
        <taxon>Pyrococcus</taxon>
    </lineage>
</organism>
<reference key="1">
    <citation type="journal article" date="1995" name="FEMS Microbiol. Lett.">
        <title>Chromosomal organization and nucleotide sequence of the fus-gene encoding elongation factor 2 (EF-2) of the hyperthermophilic archaeum Pyrococcus woesei.</title>
        <authorList>
            <person name="Creti R."/>
            <person name="Sterpetti P."/>
            <person name="Bocchetta M."/>
            <person name="Ceccarelli E."/>
            <person name="Cammarano P."/>
        </authorList>
    </citation>
    <scope>NUCLEOTIDE SEQUENCE [GENOMIC DNA]</scope>
</reference>
<sequence>MRLMIREFFQKYFIDPIKYNTGYNPVNTLVYAIILGIATLLVYKVLKRLKIEINNAFFRALIPYMIFGAFTRALTDAGVFRELISLFPWDILPGLCNSIFCPFSLT</sequence>
<proteinExistence type="predicted"/>